<feature type="chain" id="PRO_0000065202" description="Uncharacterized protein C29E4.9">
    <location>
        <begin position="1"/>
        <end position="74"/>
    </location>
</feature>
<gene>
    <name type="ORF">C29E4.9</name>
</gene>
<accession>Q8IG42</accession>
<reference key="1">
    <citation type="journal article" date="1994" name="Nature">
        <title>2.2 Mb of contiguous nucleotide sequence from chromosome III of C. elegans.</title>
        <authorList>
            <person name="Wilson R."/>
            <person name="Ainscough R."/>
            <person name="Anderson K."/>
            <person name="Baynes C."/>
            <person name="Berks M."/>
            <person name="Bonfield J."/>
            <person name="Burton J."/>
            <person name="Connell M."/>
            <person name="Copsey T."/>
            <person name="Cooper J."/>
            <person name="Coulson A."/>
            <person name="Craxton M."/>
            <person name="Dear S."/>
            <person name="Du Z."/>
            <person name="Durbin R."/>
            <person name="Favello A."/>
            <person name="Fraser A."/>
            <person name="Fulton L."/>
            <person name="Gardner A."/>
            <person name="Green P."/>
            <person name="Hawkins T."/>
            <person name="Hillier L."/>
            <person name="Jier M."/>
            <person name="Johnston L."/>
            <person name="Jones M."/>
            <person name="Kershaw J."/>
            <person name="Kirsten J."/>
            <person name="Laisster N."/>
            <person name="Latreille P."/>
            <person name="Lightning J."/>
            <person name="Lloyd C."/>
            <person name="Mortimore B."/>
            <person name="O'Callaghan M."/>
            <person name="Parsons J."/>
            <person name="Percy C."/>
            <person name="Rifken L."/>
            <person name="Roopra A."/>
            <person name="Saunders D."/>
            <person name="Shownkeen R."/>
            <person name="Sims M."/>
            <person name="Smaldon N."/>
            <person name="Smith A."/>
            <person name="Smith M."/>
            <person name="Sonnhammer E."/>
            <person name="Staden R."/>
            <person name="Sulston J."/>
            <person name="Thierry-Mieg J."/>
            <person name="Thomas K."/>
            <person name="Vaudin M."/>
            <person name="Vaughan K."/>
            <person name="Waterston R."/>
            <person name="Watson A."/>
            <person name="Weinstock L."/>
            <person name="Wilkinson-Sproat J."/>
            <person name="Wohldman P."/>
        </authorList>
    </citation>
    <scope>NUCLEOTIDE SEQUENCE [LARGE SCALE GENOMIC DNA]</scope>
    <source>
        <strain>Bristol N2</strain>
    </source>
</reference>
<reference key="2">
    <citation type="journal article" date="1998" name="Science">
        <title>Genome sequence of the nematode C. elegans: a platform for investigating biology.</title>
        <authorList>
            <consortium name="The C. elegans sequencing consortium"/>
        </authorList>
    </citation>
    <scope>NUCLEOTIDE SEQUENCE [LARGE SCALE GENOMIC DNA]</scope>
    <source>
        <strain>Bristol N2</strain>
    </source>
</reference>
<organism>
    <name type="scientific">Caenorhabditis elegans</name>
    <dbReference type="NCBI Taxonomy" id="6239"/>
    <lineage>
        <taxon>Eukaryota</taxon>
        <taxon>Metazoa</taxon>
        <taxon>Ecdysozoa</taxon>
        <taxon>Nematoda</taxon>
        <taxon>Chromadorea</taxon>
        <taxon>Rhabditida</taxon>
        <taxon>Rhabditina</taxon>
        <taxon>Rhabditomorpha</taxon>
        <taxon>Rhabditoidea</taxon>
        <taxon>Rhabditidae</taxon>
        <taxon>Peloderinae</taxon>
        <taxon>Caenorhabditis</taxon>
    </lineage>
</organism>
<keyword id="KW-1185">Reference proteome</keyword>
<dbReference type="EMBL" id="FO080706">
    <property type="status" value="NOT_ANNOTATED_CDS"/>
    <property type="molecule type" value="Genomic_DNA"/>
</dbReference>
<dbReference type="FunCoup" id="Q8IG42">
    <property type="interactions" value="308"/>
</dbReference>
<dbReference type="InParanoid" id="Q8IG42"/>
<dbReference type="Proteomes" id="UP000001940">
    <property type="component" value="Chromosome III"/>
</dbReference>
<sequence length="74" mass="7752">MSTRTVGSIPALRNCPSCDVSTLSGSSFTPTSTQTPGTAYFLRGVDPANWCDVAQINCIPEDGSMQTVAINVIV</sequence>
<proteinExistence type="predicted"/>
<protein>
    <recommendedName>
        <fullName>Uncharacterized protein C29E4.9</fullName>
    </recommendedName>
</protein>
<name>YK69_CAEEL</name>